<comment type="function">
    <text>PsaA and PsaB bind P700, the primary electron donor of photosystem I (PSI), as well as the electron acceptors A0, A1 and FX. PSI is a plastocyanin-ferredoxin oxidoreductase, converting photonic excitation into a charge separation, which transfers an electron from the donor P700 chlorophyll pair to the spectroscopically characterized acceptors A0, A1, FX, FA and FB in turn. Oxidized P700 is reduced on the lumenal side of the thylakoid membrane by plastocyanin.</text>
</comment>
<comment type="catalytic activity">
    <reaction>
        <text>reduced [plastocyanin] + hnu + oxidized [2Fe-2S]-[ferredoxin] = oxidized [plastocyanin] + reduced [2Fe-2S]-[ferredoxin]</text>
        <dbReference type="Rhea" id="RHEA:30407"/>
        <dbReference type="Rhea" id="RHEA-COMP:10000"/>
        <dbReference type="Rhea" id="RHEA-COMP:10001"/>
        <dbReference type="Rhea" id="RHEA-COMP:10039"/>
        <dbReference type="Rhea" id="RHEA-COMP:10040"/>
        <dbReference type="ChEBI" id="CHEBI:29036"/>
        <dbReference type="ChEBI" id="CHEBI:30212"/>
        <dbReference type="ChEBI" id="CHEBI:33737"/>
        <dbReference type="ChEBI" id="CHEBI:33738"/>
        <dbReference type="ChEBI" id="CHEBI:49552"/>
        <dbReference type="EC" id="1.97.1.12"/>
    </reaction>
</comment>
<comment type="cofactor">
    <text evidence="1">P700 is a chlorophyll a/chlorophyll a' dimer, A0 is one or more chlorophyll a, A1 is one or both phylloquinones and FX is a shared 4Fe-4S iron-sulfur center.</text>
</comment>
<comment type="subunit">
    <text evidence="1">The PsaA/B heterodimer binds the P700 chlorophyll special pair and subsequent electron acceptors. PSI consists of a core antenna complex that captures photons, and an electron transfer chain that converts photonic excitation into a charge separation. The eukaryotic PSI reaction center is composed of at least 11 subunits (By similarity).</text>
</comment>
<comment type="subcellular location">
    <subcellularLocation>
        <location evidence="1">Plastid</location>
        <location evidence="1">Chloroplast thylakoid membrane</location>
        <topology evidence="1">Multi-pass membrane protein</topology>
    </subcellularLocation>
</comment>
<comment type="similarity">
    <text evidence="3">Belongs to the PsaA/PsaB family.</text>
</comment>
<feature type="chain" id="PRO_0000088558" description="Photosystem I P700 chlorophyll a apoprotein A1">
    <location>
        <begin position="1" status="less than"/>
        <end position="720" status="greater than"/>
    </location>
</feature>
<feature type="transmembrane region" description="Helical; Name=I" evidence="2">
    <location>
        <begin position="60"/>
        <end position="83"/>
    </location>
</feature>
<feature type="transmembrane region" description="Helical; Name=II" evidence="2">
    <location>
        <begin position="146"/>
        <end position="169"/>
    </location>
</feature>
<feature type="transmembrane region" description="Helical; Name=III" evidence="2">
    <location>
        <begin position="185"/>
        <end position="209"/>
    </location>
</feature>
<feature type="transmembrane region" description="Helical; Name=IV" evidence="2">
    <location>
        <begin position="281"/>
        <end position="299"/>
    </location>
</feature>
<feature type="transmembrane region" description="Helical; Name=V" evidence="2">
    <location>
        <begin position="336"/>
        <end position="359"/>
    </location>
</feature>
<feature type="transmembrane region" description="Helical; Name=VI" evidence="2">
    <location>
        <begin position="375"/>
        <end position="401"/>
    </location>
</feature>
<feature type="transmembrane region" description="Helical; Name=VII" evidence="2">
    <location>
        <begin position="423"/>
        <end position="445"/>
    </location>
</feature>
<feature type="transmembrane region" description="Helical; Name=VIII" evidence="2">
    <location>
        <begin position="521"/>
        <end position="539"/>
    </location>
</feature>
<feature type="transmembrane region" description="Helical; Name=IX" evidence="2">
    <location>
        <begin position="579"/>
        <end position="600"/>
    </location>
</feature>
<feature type="transmembrane region" description="Helical; Name=X" evidence="2">
    <location>
        <begin position="654"/>
        <end position="676"/>
    </location>
</feature>
<feature type="transmembrane region" description="Helical; Name=XI" evidence="2">
    <location>
        <begin position="714"/>
        <end position="720" status="greater than"/>
    </location>
</feature>
<feature type="binding site" evidence="1">
    <location>
        <position position="563"/>
    </location>
    <ligand>
        <name>[4Fe-4S] cluster</name>
        <dbReference type="ChEBI" id="CHEBI:49883"/>
        <note>ligand shared between dimeric partners</note>
    </ligand>
</feature>
<feature type="binding site" evidence="1">
    <location>
        <position position="572"/>
    </location>
    <ligand>
        <name>[4Fe-4S] cluster</name>
        <dbReference type="ChEBI" id="CHEBI:49883"/>
        <note>ligand shared between dimeric partners</note>
    </ligand>
</feature>
<feature type="binding site" description="axial binding residue" evidence="1">
    <location>
        <position position="665"/>
    </location>
    <ligand>
        <name>chlorophyll a'</name>
        <dbReference type="ChEBI" id="CHEBI:189419"/>
        <label>A1</label>
    </ligand>
    <ligandPart>
        <name>Mg</name>
        <dbReference type="ChEBI" id="CHEBI:25107"/>
    </ligandPart>
</feature>
<feature type="binding site" description="axial binding residue" evidence="1">
    <location>
        <position position="673"/>
    </location>
    <ligand>
        <name>chlorophyll a</name>
        <dbReference type="ChEBI" id="CHEBI:58416"/>
        <label>A3</label>
    </ligand>
    <ligandPart>
        <name>Mg</name>
        <dbReference type="ChEBI" id="CHEBI:25107"/>
    </ligandPart>
</feature>
<feature type="binding site" evidence="1">
    <location>
        <position position="681"/>
    </location>
    <ligand>
        <name>chlorophyll a</name>
        <dbReference type="ChEBI" id="CHEBI:58416"/>
        <label>A3</label>
    </ligand>
</feature>
<feature type="binding site" evidence="1">
    <location>
        <position position="682"/>
    </location>
    <ligand>
        <name>phylloquinone</name>
        <dbReference type="ChEBI" id="CHEBI:18067"/>
        <label>A</label>
    </ligand>
</feature>
<feature type="non-terminal residue">
    <location>
        <position position="1"/>
    </location>
</feature>
<feature type="non-terminal residue">
    <location>
        <position position="720"/>
    </location>
</feature>
<name>PSAA_MARBO</name>
<protein>
    <recommendedName>
        <fullName>Photosystem I P700 chlorophyll a apoprotein A1</fullName>
        <ecNumber>1.97.1.12</ecNumber>
    </recommendedName>
    <alternativeName>
        <fullName>PSI-A</fullName>
    </alternativeName>
    <alternativeName>
        <fullName>PsaA</fullName>
    </alternativeName>
</protein>
<gene>
    <name type="primary">psaA</name>
</gene>
<accession>Q9MUK1</accession>
<geneLocation type="chloroplast"/>
<reference key="1">
    <citation type="journal article" date="2000" name="Mol. Biol. Evol.">
        <title>Error, bias, and long-branch attraction in data for two chloroplast photosystem genes in seed plants.</title>
        <authorList>
            <person name="Sanderson M.J."/>
            <person name="Wojciechowski M.F."/>
            <person name="Hu J.-M."/>
            <person name="Sher Khan T."/>
            <person name="Brady S.G."/>
        </authorList>
    </citation>
    <scope>NUCLEOTIDE SEQUENCE [GENOMIC DNA]</scope>
</reference>
<proteinExistence type="inferred from homology"/>
<sequence length="720" mass="79952">XIMVEKDPVKTSFEKWAQPGHFSKALAKGPSTTTWIWNLHADAHDFDSHTNDLEDISRKIFSAHFGQLGIIFIWLSGMYFHGARFSNYEAWLNDPTHVKPSAQVVWPIVGQEILNGDVGGGFQGIQITSGFFQLWRASGITSELQLYCTAIGGLIFAGLMFFAGWFHYHKAAPKLAWFQNVESMLNHHLAGLLGLGSLAWAGHQIHVSLPINQLLDAGVDPKEIPLPHEFILNRELMAQTFPSFAKGLIPFFTLDWSEYSDFLTFRGGLNPVTGGLWLTDTAHHHLAIAVLFLVAGHMYRTXXXXXXXXXXXXXXXXXXXXXXXXXXXXXXXXXXXXXXXXXXXXXXXXXXXXXAHHMYAMPPYPYLATDYATQLSLFTHHMWIGGFLIVGAAAHAAIFMVRDYDPTTQYNNLLDRVIRHRDAIISHLNWVCIFLGFHSFGLYIHNDTMSALGRPQDMFSDTAIQLQPVFAQWVQNTHALAPGSTAPNAAASTSPTWGGSDLVAVGGKVALAPIPLGTADFLVHHIHAFTIHVTVLILLKGVLFARSSRLIPDKANLGFRFPCDGPGRGGTCQVSAWDHVFLGLFWMYNSISVVIFHFSWKMQSDVWGSISEEGVVNHITGGNFAQSSTTINGWLRDFLWAQASQVIQSYGSSLSAYGLLFLGAHFVWAFSLMFLFSGRGYWQELIESIVWAHNKLKVAPVTQPRALSIIQGRAVGVAHY</sequence>
<keyword id="KW-0004">4Fe-4S</keyword>
<keyword id="KW-0148">Chlorophyll</keyword>
<keyword id="KW-0150">Chloroplast</keyword>
<keyword id="KW-0157">Chromophore</keyword>
<keyword id="KW-0249">Electron transport</keyword>
<keyword id="KW-0408">Iron</keyword>
<keyword id="KW-0411">Iron-sulfur</keyword>
<keyword id="KW-0460">Magnesium</keyword>
<keyword id="KW-0472">Membrane</keyword>
<keyword id="KW-0479">Metal-binding</keyword>
<keyword id="KW-0560">Oxidoreductase</keyword>
<keyword id="KW-0602">Photosynthesis</keyword>
<keyword id="KW-0603">Photosystem I</keyword>
<keyword id="KW-0934">Plastid</keyword>
<keyword id="KW-0793">Thylakoid</keyword>
<keyword id="KW-0812">Transmembrane</keyword>
<keyword id="KW-1133">Transmembrane helix</keyword>
<keyword id="KW-0813">Transport</keyword>
<dbReference type="EC" id="1.97.1.12"/>
<dbReference type="EMBL" id="AF180014">
    <property type="protein sequence ID" value="AAF29815.1"/>
    <property type="molecule type" value="Genomic_DNA"/>
</dbReference>
<dbReference type="GO" id="GO:0009535">
    <property type="term" value="C:chloroplast thylakoid membrane"/>
    <property type="evidence" value="ECO:0007669"/>
    <property type="project" value="UniProtKB-SubCell"/>
</dbReference>
<dbReference type="GO" id="GO:0009522">
    <property type="term" value="C:photosystem I"/>
    <property type="evidence" value="ECO:0007669"/>
    <property type="project" value="UniProtKB-KW"/>
</dbReference>
<dbReference type="GO" id="GO:0051539">
    <property type="term" value="F:4 iron, 4 sulfur cluster binding"/>
    <property type="evidence" value="ECO:0007669"/>
    <property type="project" value="UniProtKB-KW"/>
</dbReference>
<dbReference type="GO" id="GO:0016168">
    <property type="term" value="F:chlorophyll binding"/>
    <property type="evidence" value="ECO:0007669"/>
    <property type="project" value="UniProtKB-KW"/>
</dbReference>
<dbReference type="GO" id="GO:0046872">
    <property type="term" value="F:metal ion binding"/>
    <property type="evidence" value="ECO:0007669"/>
    <property type="project" value="UniProtKB-KW"/>
</dbReference>
<dbReference type="GO" id="GO:0016491">
    <property type="term" value="F:oxidoreductase activity"/>
    <property type="evidence" value="ECO:0007669"/>
    <property type="project" value="UniProtKB-KW"/>
</dbReference>
<dbReference type="GO" id="GO:0015979">
    <property type="term" value="P:photosynthesis"/>
    <property type="evidence" value="ECO:0007669"/>
    <property type="project" value="UniProtKB-KW"/>
</dbReference>
<dbReference type="Gene3D" id="1.20.1130.10">
    <property type="entry name" value="Photosystem I PsaA/PsaB"/>
    <property type="match status" value="1"/>
</dbReference>
<dbReference type="InterPro" id="IPR006243">
    <property type="entry name" value="PSI_PsaA"/>
</dbReference>
<dbReference type="InterPro" id="IPR001280">
    <property type="entry name" value="PSI_PsaA/B"/>
</dbReference>
<dbReference type="InterPro" id="IPR020586">
    <property type="entry name" value="PSI_PsaA/B_CS"/>
</dbReference>
<dbReference type="InterPro" id="IPR036408">
    <property type="entry name" value="PSI_PsaA/B_sf"/>
</dbReference>
<dbReference type="NCBIfam" id="TIGR01335">
    <property type="entry name" value="psaA"/>
    <property type="match status" value="1"/>
</dbReference>
<dbReference type="PANTHER" id="PTHR30128">
    <property type="entry name" value="OUTER MEMBRANE PROTEIN, OMPA-RELATED"/>
    <property type="match status" value="1"/>
</dbReference>
<dbReference type="PANTHER" id="PTHR30128:SF19">
    <property type="entry name" value="PHOTOSYSTEM I P700 CHLOROPHYLL A APOPROTEIN A1-RELATED"/>
    <property type="match status" value="1"/>
</dbReference>
<dbReference type="Pfam" id="PF00223">
    <property type="entry name" value="PsaA_PsaB"/>
    <property type="match status" value="1"/>
</dbReference>
<dbReference type="PIRSF" id="PIRSF002905">
    <property type="entry name" value="PSI_A"/>
    <property type="match status" value="1"/>
</dbReference>
<dbReference type="PRINTS" id="PR00257">
    <property type="entry name" value="PHOTSYSPSAAB"/>
</dbReference>
<dbReference type="SUPFAM" id="SSF81558">
    <property type="entry name" value="Photosystem I subunits PsaA/PsaB"/>
    <property type="match status" value="1"/>
</dbReference>
<dbReference type="PROSITE" id="PS00419">
    <property type="entry name" value="PHOTOSYSTEM_I_PSAAB"/>
    <property type="match status" value="1"/>
</dbReference>
<evidence type="ECO:0000250" key="1"/>
<evidence type="ECO:0000255" key="2"/>
<evidence type="ECO:0000305" key="3"/>
<organism>
    <name type="scientific">Marsilea botryocarpa</name>
    <name type="common">Water clover</name>
    <dbReference type="NCBI Taxonomy" id="113539"/>
    <lineage>
        <taxon>Eukaryota</taxon>
        <taxon>Viridiplantae</taxon>
        <taxon>Streptophyta</taxon>
        <taxon>Embryophyta</taxon>
        <taxon>Tracheophyta</taxon>
        <taxon>Polypodiopsida</taxon>
        <taxon>Polypodiidae</taxon>
        <taxon>Salviniales</taxon>
        <taxon>Marsileaceae</taxon>
        <taxon>Marsilea</taxon>
    </lineage>
</organism>